<evidence type="ECO:0000250" key="1">
    <source>
        <dbReference type="UniProtKB" id="P07492"/>
    </source>
</evidence>
<evidence type="ECO:0000250" key="2">
    <source>
        <dbReference type="UniProtKB" id="P63153"/>
    </source>
</evidence>
<evidence type="ECO:0000250" key="3">
    <source>
        <dbReference type="UniProtKB" id="Q863C3"/>
    </source>
</evidence>
<evidence type="ECO:0000269" key="4">
    <source>
    </source>
</evidence>
<evidence type="ECO:0000305" key="5"/>
<proteinExistence type="evidence at protein level"/>
<dbReference type="PIR" id="S06263">
    <property type="entry name" value="S06263"/>
</dbReference>
<dbReference type="GO" id="GO:0005615">
    <property type="term" value="C:extracellular space"/>
    <property type="evidence" value="ECO:0000250"/>
    <property type="project" value="UniProtKB"/>
</dbReference>
<dbReference type="GO" id="GO:0034774">
    <property type="term" value="C:secretory granule lumen"/>
    <property type="evidence" value="ECO:0000250"/>
    <property type="project" value="UniProtKB"/>
</dbReference>
<dbReference type="GO" id="GO:0007218">
    <property type="term" value="P:neuropeptide signaling pathway"/>
    <property type="evidence" value="ECO:0007669"/>
    <property type="project" value="InterPro"/>
</dbReference>
<dbReference type="GO" id="GO:0090277">
    <property type="term" value="P:positive regulation of peptide hormone secretion"/>
    <property type="evidence" value="ECO:0000250"/>
    <property type="project" value="UniProtKB"/>
</dbReference>
<dbReference type="GO" id="GO:1900738">
    <property type="term" value="P:positive regulation of phospholipase C-activating G protein-coupled receptor signaling pathway"/>
    <property type="evidence" value="ECO:0000250"/>
    <property type="project" value="UniProtKB"/>
</dbReference>
<dbReference type="InterPro" id="IPR000874">
    <property type="entry name" value="Bombesin"/>
</dbReference>
<dbReference type="Pfam" id="PF02044">
    <property type="entry name" value="Bombesin"/>
    <property type="match status" value="1"/>
</dbReference>
<dbReference type="PROSITE" id="PS00257">
    <property type="entry name" value="BOMBESIN"/>
    <property type="match status" value="1"/>
</dbReference>
<accession>P09472</accession>
<comment type="function">
    <text evidence="2">Stimulates the release of gastrin and other gastrointestinal hormones.</text>
</comment>
<comment type="subcellular location">
    <subcellularLocation>
        <location evidence="1">Secreted</location>
    </subcellularLocation>
    <subcellularLocation>
        <location evidence="3">Cytoplasmic vesicle</location>
        <location evidence="3">Secretory vesicle lumen</location>
    </subcellularLocation>
</comment>
<comment type="similarity">
    <text evidence="5">Belongs to the bombesin/neuromedin-B/ranatensin family.</text>
</comment>
<gene>
    <name type="primary">grp</name>
</gene>
<organism>
    <name type="scientific">Scyliorhinus canicula</name>
    <name type="common">Small-spotted catshark</name>
    <name type="synonym">Squalus canicula</name>
    <dbReference type="NCBI Taxonomy" id="7830"/>
    <lineage>
        <taxon>Eukaryota</taxon>
        <taxon>Metazoa</taxon>
        <taxon>Chordata</taxon>
        <taxon>Craniata</taxon>
        <taxon>Vertebrata</taxon>
        <taxon>Chondrichthyes</taxon>
        <taxon>Elasmobranchii</taxon>
        <taxon>Galeomorphii</taxon>
        <taxon>Galeoidea</taxon>
        <taxon>Carcharhiniformes</taxon>
        <taxon>Scyliorhinidae</taxon>
        <taxon>Scyliorhinus</taxon>
    </lineage>
</organism>
<reference key="1">
    <citation type="journal article" date="1987" name="Gen. Comp. Endocrinol.">
        <title>Gastrin-releasing peptide from the intestine of the elasmobranch fish, Scyliorhinus canicula (common dogfish).</title>
        <authorList>
            <person name="Conlon J.M."/>
            <person name="Henderson I.W."/>
            <person name="Thim L."/>
        </authorList>
    </citation>
    <scope>PROTEIN SEQUENCE</scope>
    <scope>AMIDATION AT MET-25</scope>
</reference>
<sequence length="25" mass="2781">APVENQGSFPKMFPRGSHWAVGHLM</sequence>
<name>GRP_SCYCA</name>
<protein>
    <recommendedName>
        <fullName>Gastrin-releasing peptide</fullName>
        <shortName>GRP</shortName>
    </recommendedName>
</protein>
<keyword id="KW-0027">Amidation</keyword>
<keyword id="KW-0968">Cytoplasmic vesicle</keyword>
<keyword id="KW-0903">Direct protein sequencing</keyword>
<keyword id="KW-0964">Secreted</keyword>
<feature type="peptide" id="PRO_0000043498" description="Gastrin-releasing peptide" evidence="4">
    <location>
        <begin position="1"/>
        <end position="25"/>
    </location>
</feature>
<feature type="modified residue" description="Methionine amide" evidence="4">
    <location>
        <position position="25"/>
    </location>
</feature>